<gene>
    <name evidence="1" type="primary">truA</name>
    <name type="ordered locus">Aave_1217</name>
</gene>
<organism>
    <name type="scientific">Paracidovorax citrulli (strain AAC00-1)</name>
    <name type="common">Acidovorax citrulli</name>
    <dbReference type="NCBI Taxonomy" id="397945"/>
    <lineage>
        <taxon>Bacteria</taxon>
        <taxon>Pseudomonadati</taxon>
        <taxon>Pseudomonadota</taxon>
        <taxon>Betaproteobacteria</taxon>
        <taxon>Burkholderiales</taxon>
        <taxon>Comamonadaceae</taxon>
        <taxon>Paracidovorax</taxon>
    </lineage>
</organism>
<name>TRUA_PARC0</name>
<comment type="function">
    <text evidence="1">Formation of pseudouridine at positions 38, 39 and 40 in the anticodon stem and loop of transfer RNAs.</text>
</comment>
<comment type="catalytic activity">
    <reaction evidence="1">
        <text>uridine(38/39/40) in tRNA = pseudouridine(38/39/40) in tRNA</text>
        <dbReference type="Rhea" id="RHEA:22376"/>
        <dbReference type="Rhea" id="RHEA-COMP:10085"/>
        <dbReference type="Rhea" id="RHEA-COMP:10087"/>
        <dbReference type="ChEBI" id="CHEBI:65314"/>
        <dbReference type="ChEBI" id="CHEBI:65315"/>
        <dbReference type="EC" id="5.4.99.12"/>
    </reaction>
</comment>
<comment type="subunit">
    <text evidence="1">Homodimer.</text>
</comment>
<comment type="similarity">
    <text evidence="1">Belongs to the tRNA pseudouridine synthase TruA family.</text>
</comment>
<proteinExistence type="inferred from homology"/>
<dbReference type="EC" id="5.4.99.12" evidence="1"/>
<dbReference type="EMBL" id="CP000512">
    <property type="protein sequence ID" value="ABM31808.1"/>
    <property type="molecule type" value="Genomic_DNA"/>
</dbReference>
<dbReference type="RefSeq" id="WP_011794360.1">
    <property type="nucleotide sequence ID" value="NC_008752.1"/>
</dbReference>
<dbReference type="SMR" id="A1TLH0"/>
<dbReference type="STRING" id="397945.Aave_1217"/>
<dbReference type="GeneID" id="79790877"/>
<dbReference type="KEGG" id="aav:Aave_1217"/>
<dbReference type="eggNOG" id="COG0101">
    <property type="taxonomic scope" value="Bacteria"/>
</dbReference>
<dbReference type="HOGENOM" id="CLU_014673_0_2_4"/>
<dbReference type="OrthoDB" id="9811823at2"/>
<dbReference type="Proteomes" id="UP000002596">
    <property type="component" value="Chromosome"/>
</dbReference>
<dbReference type="GO" id="GO:0003723">
    <property type="term" value="F:RNA binding"/>
    <property type="evidence" value="ECO:0007669"/>
    <property type="project" value="InterPro"/>
</dbReference>
<dbReference type="GO" id="GO:0160147">
    <property type="term" value="F:tRNA pseudouridine(38-40) synthase activity"/>
    <property type="evidence" value="ECO:0007669"/>
    <property type="project" value="UniProtKB-EC"/>
</dbReference>
<dbReference type="GO" id="GO:0031119">
    <property type="term" value="P:tRNA pseudouridine synthesis"/>
    <property type="evidence" value="ECO:0007669"/>
    <property type="project" value="UniProtKB-UniRule"/>
</dbReference>
<dbReference type="CDD" id="cd02570">
    <property type="entry name" value="PseudoU_synth_EcTruA"/>
    <property type="match status" value="1"/>
</dbReference>
<dbReference type="FunFam" id="3.30.70.580:FF:000001">
    <property type="entry name" value="tRNA pseudouridine synthase A"/>
    <property type="match status" value="1"/>
</dbReference>
<dbReference type="Gene3D" id="3.30.70.660">
    <property type="entry name" value="Pseudouridine synthase I, catalytic domain, C-terminal subdomain"/>
    <property type="match status" value="1"/>
</dbReference>
<dbReference type="Gene3D" id="3.30.70.580">
    <property type="entry name" value="Pseudouridine synthase I, catalytic domain, N-terminal subdomain"/>
    <property type="match status" value="1"/>
</dbReference>
<dbReference type="HAMAP" id="MF_00171">
    <property type="entry name" value="TruA"/>
    <property type="match status" value="1"/>
</dbReference>
<dbReference type="InterPro" id="IPR020103">
    <property type="entry name" value="PsdUridine_synth_cat_dom_sf"/>
</dbReference>
<dbReference type="InterPro" id="IPR001406">
    <property type="entry name" value="PsdUridine_synth_TruA"/>
</dbReference>
<dbReference type="InterPro" id="IPR020097">
    <property type="entry name" value="PsdUridine_synth_TruA_a/b_dom"/>
</dbReference>
<dbReference type="InterPro" id="IPR020095">
    <property type="entry name" value="PsdUridine_synth_TruA_C"/>
</dbReference>
<dbReference type="InterPro" id="IPR020094">
    <property type="entry name" value="TruA/RsuA/RluB/E/F_N"/>
</dbReference>
<dbReference type="NCBIfam" id="TIGR00071">
    <property type="entry name" value="hisT_truA"/>
    <property type="match status" value="1"/>
</dbReference>
<dbReference type="PANTHER" id="PTHR11142">
    <property type="entry name" value="PSEUDOURIDYLATE SYNTHASE"/>
    <property type="match status" value="1"/>
</dbReference>
<dbReference type="PANTHER" id="PTHR11142:SF0">
    <property type="entry name" value="TRNA PSEUDOURIDINE SYNTHASE-LIKE 1"/>
    <property type="match status" value="1"/>
</dbReference>
<dbReference type="Pfam" id="PF01416">
    <property type="entry name" value="PseudoU_synth_1"/>
    <property type="match status" value="2"/>
</dbReference>
<dbReference type="PIRSF" id="PIRSF001430">
    <property type="entry name" value="tRNA_psdUrid_synth"/>
    <property type="match status" value="1"/>
</dbReference>
<dbReference type="SUPFAM" id="SSF55120">
    <property type="entry name" value="Pseudouridine synthase"/>
    <property type="match status" value="1"/>
</dbReference>
<keyword id="KW-0413">Isomerase</keyword>
<keyword id="KW-0819">tRNA processing</keyword>
<reference key="1">
    <citation type="submission" date="2006-12" db="EMBL/GenBank/DDBJ databases">
        <title>Complete sequence of Acidovorax avenae subsp. citrulli AAC00-1.</title>
        <authorList>
            <person name="Copeland A."/>
            <person name="Lucas S."/>
            <person name="Lapidus A."/>
            <person name="Barry K."/>
            <person name="Detter J.C."/>
            <person name="Glavina del Rio T."/>
            <person name="Dalin E."/>
            <person name="Tice H."/>
            <person name="Pitluck S."/>
            <person name="Kiss H."/>
            <person name="Brettin T."/>
            <person name="Bruce D."/>
            <person name="Han C."/>
            <person name="Tapia R."/>
            <person name="Gilna P."/>
            <person name="Schmutz J."/>
            <person name="Larimer F."/>
            <person name="Land M."/>
            <person name="Hauser L."/>
            <person name="Kyrpides N."/>
            <person name="Kim E."/>
            <person name="Stahl D."/>
            <person name="Richardson P."/>
        </authorList>
    </citation>
    <scope>NUCLEOTIDE SEQUENCE [LARGE SCALE GENOMIC DNA]</scope>
    <source>
        <strain>AAC00-1</strain>
    </source>
</reference>
<evidence type="ECO:0000255" key="1">
    <source>
        <dbReference type="HAMAP-Rule" id="MF_00171"/>
    </source>
</evidence>
<protein>
    <recommendedName>
        <fullName evidence="1">tRNA pseudouridine synthase A</fullName>
        <ecNumber evidence="1">5.4.99.12</ecNumber>
    </recommendedName>
    <alternativeName>
        <fullName evidence="1">tRNA pseudouridine(38-40) synthase</fullName>
    </alternativeName>
    <alternativeName>
        <fullName evidence="1">tRNA pseudouridylate synthase I</fullName>
    </alternativeName>
    <alternativeName>
        <fullName evidence="1">tRNA-uridine isomerase I</fullName>
    </alternativeName>
</protein>
<accession>A1TLH0</accession>
<sequence length="278" mass="30451">MRVALGVSYNGSAYRGWQSQPGGATVQDRLEAALARFATHEVSTICAGRTDAGVHGLMQVVHFDTPLERTPFSWVRGTNTFLPPDIAVQWARPVPEAFHSRASATARRYAYVLLQSPVRPSVEAGRVGWVFHALDGDAMRAAARHLLGEHDFTSFRASACQAKSPVKTLRRIEITQRGTGGVPAGQAPGDRGDVPTCYWRFEFEGNAFLHHMVRNIMGCLVAVGQGQHPADWMHAVLQARSRDAAAPTFSPDGLYFLGPLYDPAWGLPDRTAAYDWLP</sequence>
<feature type="chain" id="PRO_1000017031" description="tRNA pseudouridine synthase A">
    <location>
        <begin position="1"/>
        <end position="278"/>
    </location>
</feature>
<feature type="active site" description="Nucleophile" evidence="1">
    <location>
        <position position="51"/>
    </location>
</feature>
<feature type="binding site" evidence="1">
    <location>
        <position position="109"/>
    </location>
    <ligand>
        <name>substrate</name>
    </ligand>
</feature>